<reference key="1">
    <citation type="journal article" date="2006" name="Proc. Natl. Acad. Sci. U.S.A.">
        <title>Genome reduction in Leptospira borgpetersenii reflects limited transmission potential.</title>
        <authorList>
            <person name="Bulach D.M."/>
            <person name="Zuerner R.L."/>
            <person name="Wilson P."/>
            <person name="Seemann T."/>
            <person name="McGrath A."/>
            <person name="Cullen P.A."/>
            <person name="Davis J."/>
            <person name="Johnson M."/>
            <person name="Kuczek E."/>
            <person name="Alt D.P."/>
            <person name="Peterson-Burch B."/>
            <person name="Coppel R.L."/>
            <person name="Rood J.I."/>
            <person name="Davies J.K."/>
            <person name="Adler B."/>
        </authorList>
    </citation>
    <scope>NUCLEOTIDE SEQUENCE [LARGE SCALE GENOMIC DNA]</scope>
    <source>
        <strain>L550</strain>
    </source>
</reference>
<accession>Q053P2</accession>
<keyword id="KW-0028">Amino-acid biosynthesis</keyword>
<keyword id="KW-0963">Cytoplasm</keyword>
<keyword id="KW-0220">Diaminopimelate biosynthesis</keyword>
<keyword id="KW-0457">Lysine biosynthesis</keyword>
<keyword id="KW-0520">NAD</keyword>
<keyword id="KW-0521">NADP</keyword>
<keyword id="KW-0560">Oxidoreductase</keyword>
<evidence type="ECO:0000255" key="1">
    <source>
        <dbReference type="HAMAP-Rule" id="MF_00102"/>
    </source>
</evidence>
<evidence type="ECO:0000305" key="2"/>
<comment type="function">
    <text evidence="1">Catalyzes the conversion of 4-hydroxy-tetrahydrodipicolinate (HTPA) to tetrahydrodipicolinate.</text>
</comment>
<comment type="catalytic activity">
    <reaction evidence="1">
        <text>(S)-2,3,4,5-tetrahydrodipicolinate + NAD(+) + H2O = (2S,4S)-4-hydroxy-2,3,4,5-tetrahydrodipicolinate + NADH + H(+)</text>
        <dbReference type="Rhea" id="RHEA:35323"/>
        <dbReference type="ChEBI" id="CHEBI:15377"/>
        <dbReference type="ChEBI" id="CHEBI:15378"/>
        <dbReference type="ChEBI" id="CHEBI:16845"/>
        <dbReference type="ChEBI" id="CHEBI:57540"/>
        <dbReference type="ChEBI" id="CHEBI:57945"/>
        <dbReference type="ChEBI" id="CHEBI:67139"/>
        <dbReference type="EC" id="1.17.1.8"/>
    </reaction>
</comment>
<comment type="catalytic activity">
    <reaction evidence="1">
        <text>(S)-2,3,4,5-tetrahydrodipicolinate + NADP(+) + H2O = (2S,4S)-4-hydroxy-2,3,4,5-tetrahydrodipicolinate + NADPH + H(+)</text>
        <dbReference type="Rhea" id="RHEA:35331"/>
        <dbReference type="ChEBI" id="CHEBI:15377"/>
        <dbReference type="ChEBI" id="CHEBI:15378"/>
        <dbReference type="ChEBI" id="CHEBI:16845"/>
        <dbReference type="ChEBI" id="CHEBI:57783"/>
        <dbReference type="ChEBI" id="CHEBI:58349"/>
        <dbReference type="ChEBI" id="CHEBI:67139"/>
        <dbReference type="EC" id="1.17.1.8"/>
    </reaction>
</comment>
<comment type="pathway">
    <text evidence="1">Amino-acid biosynthesis; L-lysine biosynthesis via DAP pathway; (S)-tetrahydrodipicolinate from L-aspartate: step 4/4.</text>
</comment>
<comment type="subcellular location">
    <subcellularLocation>
        <location evidence="1">Cytoplasm</location>
    </subcellularLocation>
</comment>
<comment type="similarity">
    <text evidence="1">Belongs to the DapB family.</text>
</comment>
<comment type="caution">
    <text evidence="2">Was originally thought to be a dihydrodipicolinate reductase (DHDPR), catalyzing the conversion of dihydrodipicolinate to tetrahydrodipicolinate. However, it was shown in E.coli that the substrate of the enzymatic reaction is not dihydrodipicolinate (DHDP) but in fact (2S,4S)-4-hydroxy-2,3,4,5-tetrahydrodipicolinic acid (HTPA), the product released by the DapA-catalyzed reaction.</text>
</comment>
<dbReference type="EC" id="1.17.1.8" evidence="1"/>
<dbReference type="EMBL" id="CP000348">
    <property type="protein sequence ID" value="ABJ78453.1"/>
    <property type="molecule type" value="Genomic_DNA"/>
</dbReference>
<dbReference type="RefSeq" id="WP_011669745.1">
    <property type="nucleotide sequence ID" value="NC_008508.1"/>
</dbReference>
<dbReference type="SMR" id="Q053P2"/>
<dbReference type="KEGG" id="lbl:LBL_0912"/>
<dbReference type="HOGENOM" id="CLU_047479_2_1_12"/>
<dbReference type="UniPathway" id="UPA00034">
    <property type="reaction ID" value="UER00018"/>
</dbReference>
<dbReference type="GO" id="GO:0005829">
    <property type="term" value="C:cytosol"/>
    <property type="evidence" value="ECO:0007669"/>
    <property type="project" value="TreeGrafter"/>
</dbReference>
<dbReference type="GO" id="GO:0008839">
    <property type="term" value="F:4-hydroxy-tetrahydrodipicolinate reductase"/>
    <property type="evidence" value="ECO:0007669"/>
    <property type="project" value="UniProtKB-EC"/>
</dbReference>
<dbReference type="GO" id="GO:0051287">
    <property type="term" value="F:NAD binding"/>
    <property type="evidence" value="ECO:0007669"/>
    <property type="project" value="UniProtKB-UniRule"/>
</dbReference>
<dbReference type="GO" id="GO:0050661">
    <property type="term" value="F:NADP binding"/>
    <property type="evidence" value="ECO:0007669"/>
    <property type="project" value="UniProtKB-UniRule"/>
</dbReference>
<dbReference type="GO" id="GO:0016726">
    <property type="term" value="F:oxidoreductase activity, acting on CH or CH2 groups, NAD or NADP as acceptor"/>
    <property type="evidence" value="ECO:0007669"/>
    <property type="project" value="UniProtKB-UniRule"/>
</dbReference>
<dbReference type="GO" id="GO:0019877">
    <property type="term" value="P:diaminopimelate biosynthetic process"/>
    <property type="evidence" value="ECO:0007669"/>
    <property type="project" value="UniProtKB-UniRule"/>
</dbReference>
<dbReference type="GO" id="GO:0009089">
    <property type="term" value="P:lysine biosynthetic process via diaminopimelate"/>
    <property type="evidence" value="ECO:0007669"/>
    <property type="project" value="UniProtKB-UniRule"/>
</dbReference>
<dbReference type="CDD" id="cd02274">
    <property type="entry name" value="DHDPR_N"/>
    <property type="match status" value="1"/>
</dbReference>
<dbReference type="FunFam" id="3.30.360.10:FF:000004">
    <property type="entry name" value="4-hydroxy-tetrahydrodipicolinate reductase"/>
    <property type="match status" value="1"/>
</dbReference>
<dbReference type="Gene3D" id="3.30.360.10">
    <property type="entry name" value="Dihydrodipicolinate Reductase, domain 2"/>
    <property type="match status" value="1"/>
</dbReference>
<dbReference type="Gene3D" id="3.40.50.720">
    <property type="entry name" value="NAD(P)-binding Rossmann-like Domain"/>
    <property type="match status" value="1"/>
</dbReference>
<dbReference type="HAMAP" id="MF_00102">
    <property type="entry name" value="DapB"/>
    <property type="match status" value="1"/>
</dbReference>
<dbReference type="InterPro" id="IPR022663">
    <property type="entry name" value="DapB_C"/>
</dbReference>
<dbReference type="InterPro" id="IPR000846">
    <property type="entry name" value="DapB_N"/>
</dbReference>
<dbReference type="InterPro" id="IPR022664">
    <property type="entry name" value="DapB_N_CS"/>
</dbReference>
<dbReference type="InterPro" id="IPR023940">
    <property type="entry name" value="DHDPR_bac"/>
</dbReference>
<dbReference type="InterPro" id="IPR036291">
    <property type="entry name" value="NAD(P)-bd_dom_sf"/>
</dbReference>
<dbReference type="NCBIfam" id="TIGR00036">
    <property type="entry name" value="dapB"/>
    <property type="match status" value="1"/>
</dbReference>
<dbReference type="PANTHER" id="PTHR20836:SF0">
    <property type="entry name" value="4-HYDROXY-TETRAHYDRODIPICOLINATE REDUCTASE 1, CHLOROPLASTIC-RELATED"/>
    <property type="match status" value="1"/>
</dbReference>
<dbReference type="PANTHER" id="PTHR20836">
    <property type="entry name" value="DIHYDRODIPICOLINATE REDUCTASE"/>
    <property type="match status" value="1"/>
</dbReference>
<dbReference type="Pfam" id="PF05173">
    <property type="entry name" value="DapB_C"/>
    <property type="match status" value="1"/>
</dbReference>
<dbReference type="Pfam" id="PF01113">
    <property type="entry name" value="DapB_N"/>
    <property type="match status" value="1"/>
</dbReference>
<dbReference type="PIRSF" id="PIRSF000161">
    <property type="entry name" value="DHPR"/>
    <property type="match status" value="1"/>
</dbReference>
<dbReference type="SUPFAM" id="SSF55347">
    <property type="entry name" value="Glyceraldehyde-3-phosphate dehydrogenase-like, C-terminal domain"/>
    <property type="match status" value="1"/>
</dbReference>
<dbReference type="SUPFAM" id="SSF51735">
    <property type="entry name" value="NAD(P)-binding Rossmann-fold domains"/>
    <property type="match status" value="1"/>
</dbReference>
<dbReference type="PROSITE" id="PS01298">
    <property type="entry name" value="DAPB"/>
    <property type="match status" value="1"/>
</dbReference>
<sequence length="269" mass="29180">MSDSKYQIALIGGSGRMGRAIITVLSSSSKSTLSSSVVSGGSVFLGMDSGLHSGIKQNGVNFSSDLEAAVRSADCVIDFSTYQNLDFTLKACIQHRKPVVIGTTGLTELQKDALKVASKEIGIVYSPNMSIGVNLLFKLTEIAAKAMGENSDIEIQDIHHRHKKDAPSGTAEKLKSILLETLGRTSKNVIHGRHGILKERDPREIGIHTFRAGEVIGDHTVYFFTPEERIEITHRAQDRKTFAVGSIHAAEFLVGRKPGLYDMFAVLGL</sequence>
<protein>
    <recommendedName>
        <fullName evidence="1">4-hydroxy-tetrahydrodipicolinate reductase</fullName>
        <shortName evidence="1">HTPA reductase</shortName>
        <ecNumber evidence="1">1.17.1.8</ecNumber>
    </recommendedName>
</protein>
<organism>
    <name type="scientific">Leptospira borgpetersenii serovar Hardjo-bovis (strain L550)</name>
    <dbReference type="NCBI Taxonomy" id="355276"/>
    <lineage>
        <taxon>Bacteria</taxon>
        <taxon>Pseudomonadati</taxon>
        <taxon>Spirochaetota</taxon>
        <taxon>Spirochaetia</taxon>
        <taxon>Leptospirales</taxon>
        <taxon>Leptospiraceae</taxon>
        <taxon>Leptospira</taxon>
    </lineage>
</organism>
<proteinExistence type="inferred from homology"/>
<name>DAPB_LEPBL</name>
<feature type="chain" id="PRO_1000008581" description="4-hydroxy-tetrahydrodipicolinate reductase">
    <location>
        <begin position="1"/>
        <end position="269"/>
    </location>
</feature>
<feature type="active site" description="Proton donor/acceptor" evidence="1">
    <location>
        <position position="159"/>
    </location>
</feature>
<feature type="active site" description="Proton donor" evidence="1">
    <location>
        <position position="163"/>
    </location>
</feature>
<feature type="binding site" evidence="1">
    <location>
        <begin position="12"/>
        <end position="17"/>
    </location>
    <ligand>
        <name>NAD(+)</name>
        <dbReference type="ChEBI" id="CHEBI:57540"/>
    </ligand>
</feature>
<feature type="binding site" evidence="1">
    <location>
        <begin position="102"/>
        <end position="104"/>
    </location>
    <ligand>
        <name>NAD(+)</name>
        <dbReference type="ChEBI" id="CHEBI:57540"/>
    </ligand>
</feature>
<feature type="binding site" evidence="1">
    <location>
        <begin position="126"/>
        <end position="129"/>
    </location>
    <ligand>
        <name>NAD(+)</name>
        <dbReference type="ChEBI" id="CHEBI:57540"/>
    </ligand>
</feature>
<feature type="binding site" evidence="1">
    <location>
        <position position="160"/>
    </location>
    <ligand>
        <name>(S)-2,3,4,5-tetrahydrodipicolinate</name>
        <dbReference type="ChEBI" id="CHEBI:16845"/>
    </ligand>
</feature>
<feature type="binding site" evidence="1">
    <location>
        <begin position="169"/>
        <end position="170"/>
    </location>
    <ligand>
        <name>(S)-2,3,4,5-tetrahydrodipicolinate</name>
        <dbReference type="ChEBI" id="CHEBI:16845"/>
    </ligand>
</feature>
<gene>
    <name evidence="1" type="primary">dapB</name>
    <name type="ordered locus">LBL_0912</name>
</gene>